<feature type="chain" id="PRO_0000124053" description="Actin-related protein 2/3 complex subunit 4">
    <location>
        <begin position="1"/>
        <end position="171"/>
    </location>
</feature>
<name>ARPC4_YEAST</name>
<organism>
    <name type="scientific">Saccharomyces cerevisiae (strain ATCC 204508 / S288c)</name>
    <name type="common">Baker's yeast</name>
    <dbReference type="NCBI Taxonomy" id="559292"/>
    <lineage>
        <taxon>Eukaryota</taxon>
        <taxon>Fungi</taxon>
        <taxon>Dikarya</taxon>
        <taxon>Ascomycota</taxon>
        <taxon>Saccharomycotina</taxon>
        <taxon>Saccharomycetes</taxon>
        <taxon>Saccharomycetales</taxon>
        <taxon>Saccharomycetaceae</taxon>
        <taxon>Saccharomyces</taxon>
    </lineage>
</organism>
<dbReference type="EMBL" id="X74152">
    <property type="status" value="NOT_ANNOTATED_CDS"/>
    <property type="molecule type" value="Genomic_DNA"/>
</dbReference>
<dbReference type="EMBL" id="S53418">
    <property type="protein sequence ID" value="AAB24905.1"/>
    <property type="status" value="ALT_TERM"/>
    <property type="molecule type" value="Genomic_DNA"/>
</dbReference>
<dbReference type="EMBL" id="Z28013">
    <property type="protein sequence ID" value="CAA81848.1"/>
    <property type="molecule type" value="Genomic_DNA"/>
</dbReference>
<dbReference type="EMBL" id="AY558348">
    <property type="protein sequence ID" value="AAS56674.1"/>
    <property type="molecule type" value="Genomic_DNA"/>
</dbReference>
<dbReference type="EMBL" id="BK006944">
    <property type="protein sequence ID" value="DAA09143.1"/>
    <property type="molecule type" value="Genomic_DNA"/>
</dbReference>
<dbReference type="PIR" id="S37826">
    <property type="entry name" value="S37826"/>
</dbReference>
<dbReference type="RefSeq" id="NP_012912.1">
    <property type="nucleotide sequence ID" value="NM_001179579.1"/>
</dbReference>
<dbReference type="SMR" id="P33204"/>
<dbReference type="BioGRID" id="34119">
    <property type="interactions" value="42"/>
</dbReference>
<dbReference type="ComplexPortal" id="CPX-607">
    <property type="entry name" value="Actin-related protein 2/3 complex"/>
</dbReference>
<dbReference type="DIP" id="DIP-1819N"/>
<dbReference type="FunCoup" id="P33204">
    <property type="interactions" value="854"/>
</dbReference>
<dbReference type="IntAct" id="P33204">
    <property type="interactions" value="25"/>
</dbReference>
<dbReference type="MINT" id="P33204"/>
<dbReference type="STRING" id="4932.YKL013C"/>
<dbReference type="iPTMnet" id="P33204"/>
<dbReference type="PaxDb" id="4932-YKL013C"/>
<dbReference type="PeptideAtlas" id="P33204"/>
<dbReference type="EnsemblFungi" id="YKL013C_mRNA">
    <property type="protein sequence ID" value="YKL013C"/>
    <property type="gene ID" value="YKL013C"/>
</dbReference>
<dbReference type="GeneID" id="853856"/>
<dbReference type="KEGG" id="sce:YKL013C"/>
<dbReference type="AGR" id="SGD:S000001496"/>
<dbReference type="SGD" id="S000001496">
    <property type="gene designation" value="ARC19"/>
</dbReference>
<dbReference type="VEuPathDB" id="FungiDB:YKL013C"/>
<dbReference type="eggNOG" id="KOG1876">
    <property type="taxonomic scope" value="Eukaryota"/>
</dbReference>
<dbReference type="GeneTree" id="ENSGT00390000016233"/>
<dbReference type="HOGENOM" id="CLU_084855_1_0_1"/>
<dbReference type="InParanoid" id="P33204"/>
<dbReference type="OMA" id="EAYLGEF"/>
<dbReference type="OrthoDB" id="336240at2759"/>
<dbReference type="BioCyc" id="YEAST:G3O-31822-MONOMER"/>
<dbReference type="Reactome" id="R-SCE-2029482">
    <property type="pathway name" value="Regulation of actin dynamics for phagocytic cup formation"/>
</dbReference>
<dbReference type="Reactome" id="R-SCE-5663213">
    <property type="pathway name" value="RHO GTPases Activate WASPs and WAVEs"/>
</dbReference>
<dbReference type="BioGRID-ORCS" id="853856">
    <property type="hits" value="1 hit in 10 CRISPR screens"/>
</dbReference>
<dbReference type="PRO" id="PR:P33204"/>
<dbReference type="Proteomes" id="UP000002311">
    <property type="component" value="Chromosome XI"/>
</dbReference>
<dbReference type="RNAct" id="P33204">
    <property type="molecule type" value="protein"/>
</dbReference>
<dbReference type="GO" id="GO:0030479">
    <property type="term" value="C:actin cortical patch"/>
    <property type="evidence" value="ECO:0007669"/>
    <property type="project" value="UniProtKB-SubCell"/>
</dbReference>
<dbReference type="GO" id="GO:0015629">
    <property type="term" value="C:actin cytoskeleton"/>
    <property type="evidence" value="ECO:0000303"/>
    <property type="project" value="ComplexPortal"/>
</dbReference>
<dbReference type="GO" id="GO:0005885">
    <property type="term" value="C:Arp2/3 protein complex"/>
    <property type="evidence" value="ECO:0000314"/>
    <property type="project" value="SGD"/>
</dbReference>
<dbReference type="GO" id="GO:0051015">
    <property type="term" value="F:actin filament binding"/>
    <property type="evidence" value="ECO:0000318"/>
    <property type="project" value="GO_Central"/>
</dbReference>
<dbReference type="GO" id="GO:0060090">
    <property type="term" value="F:molecular adaptor activity"/>
    <property type="evidence" value="ECO:0000315"/>
    <property type="project" value="SGD"/>
</dbReference>
<dbReference type="GO" id="GO:0044396">
    <property type="term" value="P:actin cortical patch organization"/>
    <property type="evidence" value="ECO:0000315"/>
    <property type="project" value="SGD"/>
</dbReference>
<dbReference type="GO" id="GO:0030041">
    <property type="term" value="P:actin filament polymerization"/>
    <property type="evidence" value="ECO:0007669"/>
    <property type="project" value="InterPro"/>
</dbReference>
<dbReference type="GO" id="GO:0045010">
    <property type="term" value="P:actin nucleation"/>
    <property type="evidence" value="ECO:0000303"/>
    <property type="project" value="ComplexPortal"/>
</dbReference>
<dbReference type="GO" id="GO:0034314">
    <property type="term" value="P:Arp2/3 complex-mediated actin nucleation"/>
    <property type="evidence" value="ECO:0000318"/>
    <property type="project" value="GO_Central"/>
</dbReference>
<dbReference type="FunFam" id="3.30.1460.20:FF:000001">
    <property type="entry name" value="Actin-related protein 2/3 complex subunit 4"/>
    <property type="match status" value="1"/>
</dbReference>
<dbReference type="Gene3D" id="3.30.1460.20">
    <property type="match status" value="1"/>
</dbReference>
<dbReference type="InterPro" id="IPR034666">
    <property type="entry name" value="ARPC2/4"/>
</dbReference>
<dbReference type="InterPro" id="IPR008384">
    <property type="entry name" value="ARPC4"/>
</dbReference>
<dbReference type="PANTHER" id="PTHR22629:SF0">
    <property type="entry name" value="ACTIN-RELATED PROTEIN 2_3 COMPLEX SUBUNIT 4"/>
    <property type="match status" value="1"/>
</dbReference>
<dbReference type="PANTHER" id="PTHR22629">
    <property type="entry name" value="ARP2/3 COMPLEX 20 KD SUBUNIT"/>
    <property type="match status" value="1"/>
</dbReference>
<dbReference type="Pfam" id="PF05856">
    <property type="entry name" value="ARPC4"/>
    <property type="match status" value="1"/>
</dbReference>
<dbReference type="PIRSF" id="PIRSF039100">
    <property type="entry name" value="ARPC4"/>
    <property type="match status" value="1"/>
</dbReference>
<dbReference type="SUPFAM" id="SSF69645">
    <property type="entry name" value="Arp2/3 complex subunits"/>
    <property type="match status" value="1"/>
</dbReference>
<proteinExistence type="evidence at protein level"/>
<comment type="function">
    <text evidence="1">Functions as actin-binding component of the Arp2/3 complex which is involved in regulation of actin polymerization and together with an activating nucleation-promoting factor (NPF) mediates the formation of branched actin networks. Seems to contact the mother actin filament (By similarity).</text>
</comment>
<comment type="subunit">
    <text evidence="3">Component of the Arp2/3 complex composed of ARP2, ARP3, ARC40/p41-ARC, ARC35/p34-ARC, ARC18/p21-ARC, ARC19/p20-ARC and ARC16/p16-ARC.</text>
</comment>
<comment type="interaction">
    <interactant intactId="EBI-2757">
        <id>P33204</id>
    </interactant>
    <interactant intactId="EBI-2764">
        <id>Q05933</id>
        <label>ARC18</label>
    </interactant>
    <organismsDiffer>false</organismsDiffer>
    <experiments>4</experiments>
</comment>
<comment type="interaction">
    <interactant intactId="EBI-2757">
        <id>P33204</id>
    </interactant>
    <interactant intactId="EBI-2770">
        <id>P53731</id>
        <label>ARC35</label>
    </interactant>
    <organismsDiffer>false</organismsDiffer>
    <experiments>4</experiments>
</comment>
<comment type="interaction">
    <interactant intactId="EBI-2757">
        <id>P33204</id>
    </interactant>
    <interactant intactId="EBI-2777">
        <id>P38328</id>
        <label>ARC40</label>
    </interactant>
    <organismsDiffer>false</organismsDiffer>
    <experiments>5</experiments>
</comment>
<comment type="interaction">
    <interactant intactId="EBI-2757">
        <id>P33204</id>
    </interactant>
    <interactant intactId="EBI-11687">
        <id>Q04439</id>
        <label>MYO5</label>
    </interactant>
    <organismsDiffer>false</organismsDiffer>
    <experiments>3</experiments>
</comment>
<comment type="subcellular location">
    <subcellularLocation>
        <location>Cytoplasm</location>
        <location>Cytoskeleton</location>
        <location>Actin patch</location>
    </subcellularLocation>
</comment>
<comment type="miscellaneous">
    <text evidence="2">Present with 9020 molecules/cell in log phase SD medium.</text>
</comment>
<comment type="similarity">
    <text evidence="4">Belongs to the ARPC4 family.</text>
</comment>
<keyword id="KW-0009">Actin-binding</keyword>
<keyword id="KW-0963">Cytoplasm</keyword>
<keyword id="KW-0206">Cytoskeleton</keyword>
<keyword id="KW-1185">Reference proteome</keyword>
<sequence length="171" mass="19916">MSQSLRPYLTAVRYSLEAALTLSNFSSQEVERHNRPEVEVPNTSAELLLQPMHISRNENEQVLIEPSVNSVRMSLMVKQADEIEQILVHKFTRFLEQRAEAFYILRRVPIPGYSISFLITNKHTESMKTGKLVDFIIEFMEDVDKEISEIKLFLNARARFVAEAYLDEFVY</sequence>
<evidence type="ECO:0000250" key="1"/>
<evidence type="ECO:0000269" key="2">
    <source>
    </source>
</evidence>
<evidence type="ECO:0000269" key="3">
    <source>
    </source>
</evidence>
<evidence type="ECO:0000305" key="4"/>
<accession>P33204</accession>
<accession>D6VXS3</accession>
<protein>
    <recommendedName>
        <fullName>Actin-related protein 2/3 complex subunit 4</fullName>
    </recommendedName>
    <alternativeName>
        <fullName>Arp2/3 complex 20 kDa</fullName>
        <shortName>p20-ARC</shortName>
    </alternativeName>
</protein>
<gene>
    <name type="primary">ARC19</name>
    <name type="ordered locus">YKL013C</name>
    <name type="ORF">YKL166</name>
</gene>
<reference key="1">
    <citation type="journal article" date="1993" name="Yeast">
        <title>Sequencing and analysis of 51.6 kilobases on the left arm of chromosome XI from Saccharomyces cerevisiae reveals 23 open reading frames including the FAS1 gene.</title>
        <authorList>
            <person name="Wiemann S."/>
            <person name="Voss H."/>
            <person name="Schwager C."/>
            <person name="Rupp T."/>
            <person name="Stegemann J."/>
            <person name="Zimmermann J."/>
            <person name="Grothues D."/>
            <person name="Sensen C."/>
            <person name="Erfle H."/>
            <person name="Hewitt N."/>
            <person name="Banrevi A."/>
            <person name="Ansorge W."/>
        </authorList>
    </citation>
    <scope>NUCLEOTIDE SEQUENCE [GENOMIC DNA]</scope>
</reference>
<reference key="2">
    <citation type="journal article" date="1994" name="Nature">
        <title>Complete DNA sequence of yeast chromosome XI.</title>
        <authorList>
            <person name="Dujon B."/>
            <person name="Alexandraki D."/>
            <person name="Andre B."/>
            <person name="Ansorge W."/>
            <person name="Baladron V."/>
            <person name="Ballesta J.P.G."/>
            <person name="Banrevi A."/>
            <person name="Bolle P.-A."/>
            <person name="Bolotin-Fukuhara M."/>
            <person name="Bossier P."/>
            <person name="Bou G."/>
            <person name="Boyer J."/>
            <person name="Buitrago M.J."/>
            <person name="Cheret G."/>
            <person name="Colleaux L."/>
            <person name="Daignan-Fornier B."/>
            <person name="del Rey F."/>
            <person name="Dion C."/>
            <person name="Domdey H."/>
            <person name="Duesterhoeft A."/>
            <person name="Duesterhus S."/>
            <person name="Entian K.-D."/>
            <person name="Erfle H."/>
            <person name="Esteban P.F."/>
            <person name="Feldmann H."/>
            <person name="Fernandes L."/>
            <person name="Fobo G.M."/>
            <person name="Fritz C."/>
            <person name="Fukuhara H."/>
            <person name="Gabel C."/>
            <person name="Gaillon L."/>
            <person name="Garcia-Cantalejo J.M."/>
            <person name="Garcia-Ramirez J.J."/>
            <person name="Gent M.E."/>
            <person name="Ghazvini M."/>
            <person name="Goffeau A."/>
            <person name="Gonzalez A."/>
            <person name="Grothues D."/>
            <person name="Guerreiro P."/>
            <person name="Hegemann J.H."/>
            <person name="Hewitt N."/>
            <person name="Hilger F."/>
            <person name="Hollenberg C.P."/>
            <person name="Horaitis O."/>
            <person name="Indge K.J."/>
            <person name="Jacquier A."/>
            <person name="James C.M."/>
            <person name="Jauniaux J.-C."/>
            <person name="Jimenez A."/>
            <person name="Keuchel H."/>
            <person name="Kirchrath L."/>
            <person name="Kleine K."/>
            <person name="Koetter P."/>
            <person name="Legrain P."/>
            <person name="Liebl S."/>
            <person name="Louis E.J."/>
            <person name="Maia e Silva A."/>
            <person name="Marck C."/>
            <person name="Monnier A.-L."/>
            <person name="Moestl D."/>
            <person name="Mueller S."/>
            <person name="Obermaier B."/>
            <person name="Oliver S.G."/>
            <person name="Pallier C."/>
            <person name="Pascolo S."/>
            <person name="Pfeiffer F."/>
            <person name="Philippsen P."/>
            <person name="Planta R.J."/>
            <person name="Pohl F.M."/>
            <person name="Pohl T.M."/>
            <person name="Poehlmann R."/>
            <person name="Portetelle D."/>
            <person name="Purnelle B."/>
            <person name="Puzos V."/>
            <person name="Ramezani Rad M."/>
            <person name="Rasmussen S.W."/>
            <person name="Remacha M.A."/>
            <person name="Revuelta J.L."/>
            <person name="Richard G.-F."/>
            <person name="Rieger M."/>
            <person name="Rodrigues-Pousada C."/>
            <person name="Rose M."/>
            <person name="Rupp T."/>
            <person name="Santos M.A."/>
            <person name="Schwager C."/>
            <person name="Sensen C."/>
            <person name="Skala J."/>
            <person name="Soares H."/>
            <person name="Sor F."/>
            <person name="Stegemann J."/>
            <person name="Tettelin H."/>
            <person name="Thierry A."/>
            <person name="Tzermia M."/>
            <person name="Urrestarazu L.A."/>
            <person name="van Dyck L."/>
            <person name="van Vliet-Reedijk J.C."/>
            <person name="Valens M."/>
            <person name="Vandenbol M."/>
            <person name="Vilela C."/>
            <person name="Vissers S."/>
            <person name="von Wettstein D."/>
            <person name="Voss H."/>
            <person name="Wiemann S."/>
            <person name="Xu G."/>
            <person name="Zimmermann J."/>
            <person name="Haasemann M."/>
            <person name="Becker I."/>
            <person name="Mewes H.-W."/>
        </authorList>
    </citation>
    <scope>NUCLEOTIDE SEQUENCE [LARGE SCALE GENOMIC DNA]</scope>
    <source>
        <strain>ATCC 204508 / S288c</strain>
    </source>
</reference>
<reference key="3">
    <citation type="journal article" date="2014" name="G3 (Bethesda)">
        <title>The reference genome sequence of Saccharomyces cerevisiae: Then and now.</title>
        <authorList>
            <person name="Engel S.R."/>
            <person name="Dietrich F.S."/>
            <person name="Fisk D.G."/>
            <person name="Binkley G."/>
            <person name="Balakrishnan R."/>
            <person name="Costanzo M.C."/>
            <person name="Dwight S.S."/>
            <person name="Hitz B.C."/>
            <person name="Karra K."/>
            <person name="Nash R.S."/>
            <person name="Weng S."/>
            <person name="Wong E.D."/>
            <person name="Lloyd P."/>
            <person name="Skrzypek M.S."/>
            <person name="Miyasato S.R."/>
            <person name="Simison M."/>
            <person name="Cherry J.M."/>
        </authorList>
    </citation>
    <scope>GENOME REANNOTATION</scope>
    <source>
        <strain>ATCC 204508 / S288c</strain>
    </source>
</reference>
<reference key="4">
    <citation type="journal article" date="2007" name="Genome Res.">
        <title>Approaching a complete repository of sequence-verified protein-encoding clones for Saccharomyces cerevisiae.</title>
        <authorList>
            <person name="Hu Y."/>
            <person name="Rolfs A."/>
            <person name="Bhullar B."/>
            <person name="Murthy T.V.S."/>
            <person name="Zhu C."/>
            <person name="Berger M.F."/>
            <person name="Camargo A.A."/>
            <person name="Kelley F."/>
            <person name="McCarron S."/>
            <person name="Jepson D."/>
            <person name="Richardson A."/>
            <person name="Raphael J."/>
            <person name="Moreira D."/>
            <person name="Taycher E."/>
            <person name="Zuo D."/>
            <person name="Mohr S."/>
            <person name="Kane M.F."/>
            <person name="Williamson J."/>
            <person name="Simpson A.J.G."/>
            <person name="Bulyk M.L."/>
            <person name="Harlow E."/>
            <person name="Marsischky G."/>
            <person name="Kolodner R.D."/>
            <person name="LaBaer J."/>
        </authorList>
    </citation>
    <scope>NUCLEOTIDE SEQUENCE [GENOMIC DNA]</scope>
    <source>
        <strain>ATCC 204508 / S288c</strain>
    </source>
</reference>
<reference key="5">
    <citation type="journal article" date="1992" name="Yeast">
        <title>The sequence of a 9.3 kb segment located on the left arm of the yeast chromosome XI reveals five open reading frames including the CCE1 gene and putative products related to MYO2 and to the ribosomal protein L10.</title>
        <authorList>
            <person name="Pascolo S."/>
            <person name="Ghazvini M."/>
            <person name="Boyer J."/>
            <person name="Colleaux L."/>
            <person name="Thierry A."/>
            <person name="Dujon B."/>
        </authorList>
    </citation>
    <scope>NUCLEOTIDE SEQUENCE [GENOMIC DNA] OF 1-130</scope>
</reference>
<reference key="6">
    <citation type="journal article" date="1997" name="Curr. Biol.">
        <title>The complex containing actin-related proteins Arp2 and Arp3 is required for the motility and integrity of yeast actin patches.</title>
        <authorList>
            <person name="Winter D."/>
            <person name="Podtelejnikov A.V."/>
            <person name="Mann M."/>
            <person name="Li R."/>
        </authorList>
    </citation>
    <scope>IDENTIFICATION IN THE ARP2/3 COMPLEX</scope>
</reference>
<reference key="7">
    <citation type="journal article" date="1997" name="Curr. Biol.">
        <authorList>
            <person name="Winter D."/>
            <person name="Podtelejnikov A.V."/>
            <person name="Mann M."/>
            <person name="Li R."/>
        </authorList>
    </citation>
    <scope>ERRATUM OF PUBMED:9210376</scope>
</reference>
<reference key="8">
    <citation type="journal article" date="2003" name="Nature">
        <title>Global analysis of protein expression in yeast.</title>
        <authorList>
            <person name="Ghaemmaghami S."/>
            <person name="Huh W.-K."/>
            <person name="Bower K."/>
            <person name="Howson R.W."/>
            <person name="Belle A."/>
            <person name="Dephoure N."/>
            <person name="O'Shea E.K."/>
            <person name="Weissman J.S."/>
        </authorList>
    </citation>
    <scope>LEVEL OF PROTEIN EXPRESSION [LARGE SCALE ANALYSIS]</scope>
</reference>